<comment type="function">
    <text evidence="1">Plays a pivotal role in the establishment of adherens junctions and their maintenance in adult life.</text>
</comment>
<comment type="subunit">
    <text evidence="1">Interacts with myosin VIIa and the cadherin-catenins complex.</text>
</comment>
<comment type="subcellular location">
    <subcellularLocation>
        <location>Cell membrane</location>
        <topology>Multi-pass membrane protein</topology>
    </subcellularLocation>
    <subcellularLocation>
        <location>Cell junction</location>
        <location>Adherens junction</location>
    </subcellularLocation>
    <subcellularLocation>
        <location evidence="1">Nucleus</location>
    </subcellularLocation>
</comment>
<comment type="similarity">
    <text evidence="4">Belongs to the vezatin family.</text>
</comment>
<keyword id="KW-0965">Cell junction</keyword>
<keyword id="KW-1003">Cell membrane</keyword>
<keyword id="KW-0175">Coiled coil</keyword>
<keyword id="KW-0472">Membrane</keyword>
<keyword id="KW-0539">Nucleus</keyword>
<keyword id="KW-1185">Reference proteome</keyword>
<keyword id="KW-0812">Transmembrane</keyword>
<keyword id="KW-1133">Transmembrane helix</keyword>
<gene>
    <name type="primary">vezt</name>
</gene>
<evidence type="ECO:0000250" key="1"/>
<evidence type="ECO:0000255" key="2"/>
<evidence type="ECO:0000256" key="3">
    <source>
        <dbReference type="SAM" id="MobiDB-lite"/>
    </source>
</evidence>
<evidence type="ECO:0000305" key="4"/>
<feature type="chain" id="PRO_0000349251" description="Vezatin">
    <location>
        <begin position="1"/>
        <end position="774"/>
    </location>
</feature>
<feature type="transmembrane region" description="Helical" evidence="2">
    <location>
        <begin position="138"/>
        <end position="158"/>
    </location>
</feature>
<feature type="transmembrane region" description="Helical" evidence="2">
    <location>
        <begin position="163"/>
        <end position="183"/>
    </location>
</feature>
<feature type="region of interest" description="Disordered" evidence="3">
    <location>
        <begin position="746"/>
        <end position="774"/>
    </location>
</feature>
<feature type="coiled-coil region" evidence="2">
    <location>
        <begin position="430"/>
        <end position="457"/>
    </location>
</feature>
<feature type="compositionally biased region" description="Acidic residues" evidence="3">
    <location>
        <begin position="746"/>
        <end position="757"/>
    </location>
</feature>
<feature type="compositionally biased region" description="Basic and acidic residues" evidence="3">
    <location>
        <begin position="758"/>
        <end position="767"/>
    </location>
</feature>
<organism>
    <name type="scientific">Xenopus laevis</name>
    <name type="common">African clawed frog</name>
    <dbReference type="NCBI Taxonomy" id="8355"/>
    <lineage>
        <taxon>Eukaryota</taxon>
        <taxon>Metazoa</taxon>
        <taxon>Chordata</taxon>
        <taxon>Craniata</taxon>
        <taxon>Vertebrata</taxon>
        <taxon>Euteleostomi</taxon>
        <taxon>Amphibia</taxon>
        <taxon>Batrachia</taxon>
        <taxon>Anura</taxon>
        <taxon>Pipoidea</taxon>
        <taxon>Pipidae</taxon>
        <taxon>Xenopodinae</taxon>
        <taxon>Xenopus</taxon>
        <taxon>Xenopus</taxon>
    </lineage>
</organism>
<name>VEZA_XENLA</name>
<sequence length="774" mass="88334">MTAEFDEEVVFENSPLFQYLQDLGHTDFEICPLSKEEERLAENGQGKQDVHTTEKKSIISRTVEFLKSWSPFLSKKKKDEKIHLLEIGFRLESLRTILQQEVLIQEDVELIELLDPGILSAGQTQNQQNDHLPTLWSIATPNIWETSILFVFLSAVAAFQSWSISSSLIWGPSLILFAAFTVLKTLHTWRSARLRIILRKYCTQVEGTVSNSRAFTNLVRKALRLIQETEVISRGFTLVSAACPYGKAGQHASQHLLGLRKAVYRTVRTNFRISRLATLYMLKHYPLNSEIDNVTNYICVVPLKDLGLGLCEEHVSEEDAHNLTDAFSLPALKVLFQLWIGQSSEFFRRLALLLSPENASQGPSTSPEQLPHFIWSDVVQDLPHTQAACMAELKRSYEFYRYFETQHQSGLERTAKRKEVGELNNLHGAVRSLQLHLKALLNEVIVLEDELDKLSSCKEMQAVTPEASLMLEEKLRIIQPHVQASNTCWEEALCQVERMVRKPTTKKDTGKYSCENLNYPVVSNVPPAMRIEDRDPVPEEQILEAYVEEAVTDQEFNSEEIYLFSPEERERQKREREESRRVLQELKAVLGLKASEAERQKWKQLLFSEHAVITPLLPEEPVGHFEPLLSIYPEEPHKNLGFYGEIPSEINGTEHVKDAPIQVDHGNMNHEDEAKICPVSEEVEPASCKEEEDETPCPAPRTVLPPAIKERLARIHQSSDLNFTSGLATQVAARSLTFTFLQEQTFGDEWDDDDDNEDHDHDKERNNDSSQLEG</sequence>
<protein>
    <recommendedName>
        <fullName>Vezatin</fullName>
    </recommendedName>
</protein>
<proteinExistence type="evidence at transcript level"/>
<dbReference type="EMBL" id="BC059333">
    <property type="protein sequence ID" value="AAH59333.1"/>
    <property type="molecule type" value="mRNA"/>
</dbReference>
<dbReference type="RefSeq" id="NP_001083222.1">
    <property type="nucleotide sequence ID" value="NM_001089753.1"/>
</dbReference>
<dbReference type="SMR" id="Q6PCG6"/>
<dbReference type="DNASU" id="398809"/>
<dbReference type="GeneID" id="398809"/>
<dbReference type="KEGG" id="xla:398809"/>
<dbReference type="AGR" id="Xenbase:XB-GENE-1015459"/>
<dbReference type="CTD" id="398809"/>
<dbReference type="Xenbase" id="XB-GENE-1015459">
    <property type="gene designation" value="vezt.L"/>
</dbReference>
<dbReference type="OrthoDB" id="21151at2759"/>
<dbReference type="Proteomes" id="UP000186698">
    <property type="component" value="Chromosome 3L"/>
</dbReference>
<dbReference type="Bgee" id="398809">
    <property type="expression patterns" value="Expressed in egg cell and 19 other cell types or tissues"/>
</dbReference>
<dbReference type="GO" id="GO:0005912">
    <property type="term" value="C:adherens junction"/>
    <property type="evidence" value="ECO:0007669"/>
    <property type="project" value="UniProtKB-SubCell"/>
</dbReference>
<dbReference type="GO" id="GO:0005634">
    <property type="term" value="C:nucleus"/>
    <property type="evidence" value="ECO:0007669"/>
    <property type="project" value="UniProtKB-SubCell"/>
</dbReference>
<dbReference type="GO" id="GO:0005886">
    <property type="term" value="C:plasma membrane"/>
    <property type="evidence" value="ECO:0000318"/>
    <property type="project" value="GO_Central"/>
</dbReference>
<dbReference type="GO" id="GO:0002142">
    <property type="term" value="C:stereocilia ankle link complex"/>
    <property type="evidence" value="ECO:0000250"/>
    <property type="project" value="UniProtKB"/>
</dbReference>
<dbReference type="GO" id="GO:0017022">
    <property type="term" value="F:myosin binding"/>
    <property type="evidence" value="ECO:0007669"/>
    <property type="project" value="InterPro"/>
</dbReference>
<dbReference type="GO" id="GO:0098609">
    <property type="term" value="P:cell-cell adhesion"/>
    <property type="evidence" value="ECO:0000318"/>
    <property type="project" value="GO_Central"/>
</dbReference>
<dbReference type="InterPro" id="IPR026859">
    <property type="entry name" value="Myosin-bd"/>
</dbReference>
<dbReference type="InterPro" id="IPR026858">
    <property type="entry name" value="Vezatin"/>
</dbReference>
<dbReference type="PANTHER" id="PTHR15989">
    <property type="entry name" value="VEZATIN"/>
    <property type="match status" value="1"/>
</dbReference>
<dbReference type="PANTHER" id="PTHR15989:SF5">
    <property type="entry name" value="VEZATIN"/>
    <property type="match status" value="1"/>
</dbReference>
<dbReference type="Pfam" id="PF12632">
    <property type="entry name" value="Vezatin"/>
    <property type="match status" value="1"/>
</dbReference>
<accession>Q6PCG6</accession>
<reference key="1">
    <citation type="submission" date="2003-10" db="EMBL/GenBank/DDBJ databases">
        <authorList>
            <consortium name="NIH - Xenopus Gene Collection (XGC) project"/>
        </authorList>
    </citation>
    <scope>NUCLEOTIDE SEQUENCE [LARGE SCALE MRNA]</scope>
    <source>
        <tissue>Spleen</tissue>
    </source>
</reference>